<keyword id="KW-0067">ATP-binding</keyword>
<keyword id="KW-0963">Cytoplasm</keyword>
<keyword id="KW-0324">Glycolysis</keyword>
<keyword id="KW-0418">Kinase</keyword>
<keyword id="KW-0547">Nucleotide-binding</keyword>
<keyword id="KW-1185">Reference proteome</keyword>
<keyword id="KW-0808">Transferase</keyword>
<name>PGK_FRATH</name>
<organism>
    <name type="scientific">Francisella tularensis subsp. holarctica (strain LVS)</name>
    <dbReference type="NCBI Taxonomy" id="376619"/>
    <lineage>
        <taxon>Bacteria</taxon>
        <taxon>Pseudomonadati</taxon>
        <taxon>Pseudomonadota</taxon>
        <taxon>Gammaproteobacteria</taxon>
        <taxon>Thiotrichales</taxon>
        <taxon>Francisellaceae</taxon>
        <taxon>Francisella</taxon>
    </lineage>
</organism>
<proteinExistence type="inferred from homology"/>
<sequence length="392" mass="42011">MSFLTLKDVDLKDKKVLVRVDFNVPVKDGKVTSKVRIEAAIPTIQYILDQGGAVILMSHLGRPTEGEYDSQFSLEPVAKALSEIINKPVKFAKDWLDGVDVKAGEIVMCENVRFNIGEKKSTDDLSKKIASLGDVFVMDAFATAHRAQASTYGVAKYIPVACAGILLTNEIQALEKALKSPKKPMAAIVGGSKVSTKLSVLNNLLDKVEILIVGGGIANTFIKAEGFDVGNSLYEQDLVAEATEILAKAKALGVNIPVPVDVRVAKEFSENAQAIIKKVSYVVADEMILDIGPESQKIIAELLKSANTILWNGPVGVFEFDNFAEGTKALSLAIAQSHAFSVAGGGDTIAAIEKFGIKDQVSYISTAGGAFLEFLEGKKLPAIEILKEKAIR</sequence>
<reference key="1">
    <citation type="submission" date="2006-03" db="EMBL/GenBank/DDBJ databases">
        <title>Complete genome sequence of Francisella tularensis LVS (Live Vaccine Strain).</title>
        <authorList>
            <person name="Chain P."/>
            <person name="Larimer F."/>
            <person name="Land M."/>
            <person name="Stilwagen S."/>
            <person name="Larsson P."/>
            <person name="Bearden S."/>
            <person name="Chu M."/>
            <person name="Oyston P."/>
            <person name="Forsman M."/>
            <person name="Andersson S."/>
            <person name="Lindler L."/>
            <person name="Titball R."/>
            <person name="Garcia E."/>
        </authorList>
    </citation>
    <scope>NUCLEOTIDE SEQUENCE [LARGE SCALE GENOMIC DNA]</scope>
    <source>
        <strain>LVS</strain>
    </source>
</reference>
<dbReference type="EC" id="2.7.2.3" evidence="1"/>
<dbReference type="EMBL" id="AM233362">
    <property type="protein sequence ID" value="CAJ79586.1"/>
    <property type="molecule type" value="Genomic_DNA"/>
</dbReference>
<dbReference type="RefSeq" id="WP_003016144.1">
    <property type="nucleotide sequence ID" value="NZ_CP009694.1"/>
</dbReference>
<dbReference type="SMR" id="Q2A369"/>
<dbReference type="KEGG" id="ftl:FTL_1147"/>
<dbReference type="UniPathway" id="UPA00109">
    <property type="reaction ID" value="UER00185"/>
</dbReference>
<dbReference type="Proteomes" id="UP000001944">
    <property type="component" value="Chromosome"/>
</dbReference>
<dbReference type="GO" id="GO:0005829">
    <property type="term" value="C:cytosol"/>
    <property type="evidence" value="ECO:0007669"/>
    <property type="project" value="TreeGrafter"/>
</dbReference>
<dbReference type="GO" id="GO:0043531">
    <property type="term" value="F:ADP binding"/>
    <property type="evidence" value="ECO:0007669"/>
    <property type="project" value="TreeGrafter"/>
</dbReference>
<dbReference type="GO" id="GO:0005524">
    <property type="term" value="F:ATP binding"/>
    <property type="evidence" value="ECO:0007669"/>
    <property type="project" value="UniProtKB-KW"/>
</dbReference>
<dbReference type="GO" id="GO:0004618">
    <property type="term" value="F:phosphoglycerate kinase activity"/>
    <property type="evidence" value="ECO:0007669"/>
    <property type="project" value="UniProtKB-UniRule"/>
</dbReference>
<dbReference type="GO" id="GO:0006094">
    <property type="term" value="P:gluconeogenesis"/>
    <property type="evidence" value="ECO:0007669"/>
    <property type="project" value="TreeGrafter"/>
</dbReference>
<dbReference type="GO" id="GO:0006096">
    <property type="term" value="P:glycolytic process"/>
    <property type="evidence" value="ECO:0007669"/>
    <property type="project" value="UniProtKB-UniRule"/>
</dbReference>
<dbReference type="FunFam" id="3.40.50.1260:FF:000001">
    <property type="entry name" value="Phosphoglycerate kinase"/>
    <property type="match status" value="1"/>
</dbReference>
<dbReference type="FunFam" id="3.40.50.1260:FF:000005">
    <property type="entry name" value="Phosphoglycerate kinase"/>
    <property type="match status" value="1"/>
</dbReference>
<dbReference type="Gene3D" id="3.40.50.1260">
    <property type="entry name" value="Phosphoglycerate kinase, N-terminal domain"/>
    <property type="match status" value="2"/>
</dbReference>
<dbReference type="HAMAP" id="MF_00145">
    <property type="entry name" value="Phosphoglyc_kinase"/>
    <property type="match status" value="1"/>
</dbReference>
<dbReference type="InterPro" id="IPR001576">
    <property type="entry name" value="Phosphoglycerate_kinase"/>
</dbReference>
<dbReference type="InterPro" id="IPR015911">
    <property type="entry name" value="Phosphoglycerate_kinase_CS"/>
</dbReference>
<dbReference type="InterPro" id="IPR015824">
    <property type="entry name" value="Phosphoglycerate_kinase_N"/>
</dbReference>
<dbReference type="InterPro" id="IPR036043">
    <property type="entry name" value="Phosphoglycerate_kinase_sf"/>
</dbReference>
<dbReference type="PANTHER" id="PTHR11406">
    <property type="entry name" value="PHOSPHOGLYCERATE KINASE"/>
    <property type="match status" value="1"/>
</dbReference>
<dbReference type="PANTHER" id="PTHR11406:SF23">
    <property type="entry name" value="PHOSPHOGLYCERATE KINASE 1, CHLOROPLASTIC-RELATED"/>
    <property type="match status" value="1"/>
</dbReference>
<dbReference type="Pfam" id="PF00162">
    <property type="entry name" value="PGK"/>
    <property type="match status" value="1"/>
</dbReference>
<dbReference type="PIRSF" id="PIRSF000724">
    <property type="entry name" value="Pgk"/>
    <property type="match status" value="1"/>
</dbReference>
<dbReference type="PRINTS" id="PR00477">
    <property type="entry name" value="PHGLYCKINASE"/>
</dbReference>
<dbReference type="SUPFAM" id="SSF53748">
    <property type="entry name" value="Phosphoglycerate kinase"/>
    <property type="match status" value="1"/>
</dbReference>
<dbReference type="PROSITE" id="PS00111">
    <property type="entry name" value="PGLYCERATE_KINASE"/>
    <property type="match status" value="1"/>
</dbReference>
<gene>
    <name evidence="1" type="primary">pgk</name>
    <name type="ordered locus">FTL_1147</name>
</gene>
<evidence type="ECO:0000255" key="1">
    <source>
        <dbReference type="HAMAP-Rule" id="MF_00145"/>
    </source>
</evidence>
<accession>Q2A369</accession>
<feature type="chain" id="PRO_1000057991" description="Phosphoglycerate kinase">
    <location>
        <begin position="1"/>
        <end position="392"/>
    </location>
</feature>
<feature type="binding site" evidence="1">
    <location>
        <begin position="21"/>
        <end position="23"/>
    </location>
    <ligand>
        <name>substrate</name>
    </ligand>
</feature>
<feature type="binding site" evidence="1">
    <location>
        <position position="36"/>
    </location>
    <ligand>
        <name>substrate</name>
    </ligand>
</feature>
<feature type="binding site" evidence="1">
    <location>
        <begin position="59"/>
        <end position="62"/>
    </location>
    <ligand>
        <name>substrate</name>
    </ligand>
</feature>
<feature type="binding site" evidence="1">
    <location>
        <position position="113"/>
    </location>
    <ligand>
        <name>substrate</name>
    </ligand>
</feature>
<feature type="binding site" evidence="1">
    <location>
        <position position="146"/>
    </location>
    <ligand>
        <name>substrate</name>
    </ligand>
</feature>
<feature type="binding site" evidence="1">
    <location>
        <position position="197"/>
    </location>
    <ligand>
        <name>ATP</name>
        <dbReference type="ChEBI" id="CHEBI:30616"/>
    </ligand>
</feature>
<feature type="binding site" evidence="1">
    <location>
        <position position="319"/>
    </location>
    <ligand>
        <name>ATP</name>
        <dbReference type="ChEBI" id="CHEBI:30616"/>
    </ligand>
</feature>
<feature type="binding site" evidence="1">
    <location>
        <begin position="345"/>
        <end position="348"/>
    </location>
    <ligand>
        <name>ATP</name>
        <dbReference type="ChEBI" id="CHEBI:30616"/>
    </ligand>
</feature>
<protein>
    <recommendedName>
        <fullName evidence="1">Phosphoglycerate kinase</fullName>
        <ecNumber evidence="1">2.7.2.3</ecNumber>
    </recommendedName>
</protein>
<comment type="catalytic activity">
    <reaction evidence="1">
        <text>(2R)-3-phosphoglycerate + ATP = (2R)-3-phospho-glyceroyl phosphate + ADP</text>
        <dbReference type="Rhea" id="RHEA:14801"/>
        <dbReference type="ChEBI" id="CHEBI:30616"/>
        <dbReference type="ChEBI" id="CHEBI:57604"/>
        <dbReference type="ChEBI" id="CHEBI:58272"/>
        <dbReference type="ChEBI" id="CHEBI:456216"/>
        <dbReference type="EC" id="2.7.2.3"/>
    </reaction>
</comment>
<comment type="pathway">
    <text evidence="1">Carbohydrate degradation; glycolysis; pyruvate from D-glyceraldehyde 3-phosphate: step 2/5.</text>
</comment>
<comment type="subunit">
    <text evidence="1">Monomer.</text>
</comment>
<comment type="subcellular location">
    <subcellularLocation>
        <location evidence="1">Cytoplasm</location>
    </subcellularLocation>
</comment>
<comment type="similarity">
    <text evidence="1">Belongs to the phosphoglycerate kinase family.</text>
</comment>